<reference key="1">
    <citation type="journal article" date="1991" name="J. Biol. Chem.">
        <title>Molecular cloning of a cDNA encoding the amino end of the mammalian multifunctional protein CAD and analysis of the 5'-flanking region of the CAD gene.</title>
        <authorList>
            <person name="Bein K."/>
            <person name="Simmer J.P."/>
            <person name="Evans D.R."/>
        </authorList>
    </citation>
    <scope>NUCLEOTIDE SEQUENCE [MRNA] OF 1-169</scope>
</reference>
<reference key="2">
    <citation type="journal article" date="1990" name="Cell Growth Differ.">
        <title>Characterization of the 5' end of the growth-regulated Syrian hamster CAD gene.</title>
        <authorList>
            <person name="Farnham P.J."/>
            <person name="Kollmar R."/>
        </authorList>
    </citation>
    <scope>NUCLEOTIDE SEQUENCE [MRNA] OF 1-73</scope>
</reference>
<reference key="3">
    <citation type="journal article" date="1990" name="J. Biol. Chem.">
        <title>Mammalian carbamyl phosphate synthetase (CPS). DNA sequence and evolution of the CPS domain of the Syrian hamster multifunctional protein CAD.</title>
        <authorList>
            <person name="Simmer J.P."/>
            <person name="Kelly R.E."/>
            <person name="Rinker A.G. Jr."/>
            <person name="Scully J.L."/>
            <person name="Evans D.R."/>
        </authorList>
    </citation>
    <scope>NUCLEOTIDE SEQUENCE [MRNA] OF 156-1455</scope>
</reference>
<reference key="4">
    <citation type="journal article" date="1988" name="Biochem. Biophys. Res. Commun.">
        <title>Identification of the junction between the glutamine amidotransferase and carbamyl phosphate synthetase domains of the mammalian CAD protein.</title>
        <authorList>
            <person name="Maley J.A."/>
            <person name="Davidson J.N."/>
        </authorList>
    </citation>
    <scope>NUCLEOTIDE SEQUENCE [MRNA] OF 246-513</scope>
</reference>
<reference key="5">
    <citation type="journal article" date="1990" name="Proc. Natl. Acad. Sci. U.S.A.">
        <title>Mammalian dihydroorotase: nucleotide sequence, peptide sequences, and evolution of the dihydroorotase domain of the multifunctional protein CAD.</title>
        <authorList>
            <person name="Simmer J.P."/>
            <person name="Kelly R.E."/>
            <person name="Rinker A.G. Jr."/>
            <person name="Zimmermann B.H."/>
            <person name="Scully J.L."/>
            <person name="Kim H."/>
            <person name="Evans D.R."/>
        </authorList>
    </citation>
    <scope>NUCLEOTIDE SEQUENCE [MRNA] OF 1391-1870</scope>
</reference>
<reference key="6">
    <citation type="journal article" date="1990" name="Gene">
        <title>Location of the dihydroorotase domain within trifunctional hamster dihydroorotate synthetase.</title>
        <authorList>
            <person name="Williams N.K."/>
            <person name="Simpson R.J."/>
            <person name="Moritz R.L."/>
            <person name="Peide Y."/>
            <person name="Crofts L."/>
            <person name="Minasian E."/>
            <person name="Leach S.J."/>
            <person name="Wake R.G."/>
            <person name="Christopherson R.I."/>
        </authorList>
    </citation>
    <scope>NUCLEOTIDE SEQUENCE [MRNA] OF 1403-2110</scope>
</reference>
<reference key="7">
    <citation type="journal article" date="1989" name="Proc. Natl. Acad. Sci. U.S.A.">
        <title>Mammalian aspartate transcarbamylase (ATCase): sequence of the ATCase domain and interdomain linker in the CAD multifunctional polypeptide and properties of the isolated domain.</title>
        <authorList>
            <person name="Simmer J.P."/>
            <person name="Kelly R.E."/>
            <person name="Scully J.L."/>
            <person name="Grayson D.R."/>
            <person name="Rinker A.G. Jr."/>
            <person name="Bergh S.T."/>
            <person name="Evans D.R."/>
        </authorList>
    </citation>
    <scope>NUCLEOTIDE SEQUENCE [MRNA] OF 1774-2225</scope>
</reference>
<reference key="8">
    <citation type="journal article" date="1985" name="Mol. Cell. Biol.">
        <title>Construction of a cDNA to the hamster CAD gene and its application toward defining the domain for aspartate transcarbamylase.</title>
        <authorList>
            <person name="Shigesada K."/>
            <person name="Stark G.R."/>
            <person name="Maley J.A."/>
            <person name="Niswander L.A."/>
            <person name="Davidson J.N."/>
        </authorList>
    </citation>
    <scope>NUCLEOTIDE SEQUENCE [MRNA] OF 2074-2225</scope>
</reference>
<reference key="9">
    <citation type="journal article" date="1985" name="Proc. Natl. Acad. Sci. U.S.A.">
        <title>Oligomeric structure of the multifunctional protein CAD that initiates pyrimidine biosynthesis in mammalian cells.</title>
        <authorList>
            <person name="Lee L."/>
            <person name="Kelly R.E."/>
            <person name="Pastra-Landis S.C."/>
            <person name="Evans D.R."/>
        </authorList>
    </citation>
    <scope>SUBUNIT</scope>
</reference>
<reference key="10">
    <citation type="journal article" date="1992" name="J. Biol. Chem.">
        <title>The structural organization of the hamster multifunctional protein CAD. Controlled proteolysis, domains, and linkers.</title>
        <authorList>
            <person name="Kim H."/>
            <person name="Kelly R.E."/>
            <person name="Evans D.R."/>
        </authorList>
    </citation>
    <scope>DOMAINS</scope>
    <scope>PARTIAL PROTEIN SEQUENCE</scope>
</reference>
<reference key="11">
    <citation type="journal article" date="1997" name="Somat. Cell Mol. Genet.">
        <title>Site-directed substitution of Ser1406 of hamster CAD with glutamic acid alters allosteric regulation of carbamyl phosphate synthetase II.</title>
        <authorList>
            <person name="Banerjei L.C."/>
            <person name="Davidson J.N."/>
        </authorList>
    </citation>
    <scope>FUNCTION</scope>
    <scope>CATALYTIC ACTIVITY</scope>
    <scope>PHOSPHORYLATION AT SER-1406</scope>
    <scope>MUTAGENESIS OF SER-1406</scope>
</reference>
<reference key="12">
    <citation type="journal article" date="1991" name="Proteins">
        <title>Comparative modeling of mammalian aspartate transcarbamylase.</title>
        <authorList>
            <person name="Scully J.L."/>
            <person name="Evans D.R."/>
        </authorList>
    </citation>
    <scope>3D-STRUCTURE MODELING OF ATCASE DOMAIN</scope>
</reference>
<feature type="initiator methionine" description="Removed" evidence="7">
    <location>
        <position position="1"/>
    </location>
</feature>
<feature type="chain" id="PRO_0000199507" description="Multifunctional protein CAD">
    <location>
        <begin position="2"/>
        <end position="2225"/>
    </location>
</feature>
<feature type="domain" description="Glutamine amidotransferase type-1" evidence="9">
    <location>
        <begin position="177"/>
        <end position="363"/>
    </location>
</feature>
<feature type="domain" description="ATP-grasp 1" evidence="8">
    <location>
        <begin position="519"/>
        <end position="711"/>
    </location>
</feature>
<feature type="domain" description="ATP-grasp 2" evidence="8">
    <location>
        <begin position="1052"/>
        <end position="1243"/>
    </location>
</feature>
<feature type="domain" description="MGS-like" evidence="10">
    <location>
        <begin position="1308"/>
        <end position="1462"/>
    </location>
</feature>
<feature type="region of interest" description="GATase (Glutamine amidotransferase)" evidence="14">
    <location>
        <begin position="2"/>
        <end position="365"/>
    </location>
</feature>
<feature type="region of interest" description="Linker" evidence="14">
    <location>
        <begin position="366"/>
        <end position="394"/>
    </location>
</feature>
<feature type="region of interest" description="CPSase (Carbamoyl phosphate synthase)" evidence="14">
    <location>
        <begin position="395"/>
        <end position="1455"/>
    </location>
</feature>
<feature type="region of interest" description="CPSase A" evidence="14">
    <location>
        <begin position="395"/>
        <end position="933"/>
    </location>
</feature>
<feature type="region of interest" description="CPSase B" evidence="14">
    <location>
        <begin position="934"/>
        <end position="1455"/>
    </location>
</feature>
<feature type="region of interest" description="DHOase (dihydroorotase)" evidence="14">
    <location>
        <begin position="1456"/>
        <end position="1788"/>
    </location>
</feature>
<feature type="region of interest" description="Linker" evidence="14">
    <location>
        <begin position="1789"/>
        <end position="1917"/>
    </location>
</feature>
<feature type="region of interest" description="Disordered" evidence="11">
    <location>
        <begin position="1813"/>
        <end position="1911"/>
    </location>
</feature>
<feature type="region of interest" description="ATCase (Aspartate transcarbamylase)" evidence="14">
    <location>
        <begin position="1918"/>
        <end position="2225"/>
    </location>
</feature>
<feature type="compositionally biased region" description="Low complexity" evidence="11">
    <location>
        <begin position="1825"/>
        <end position="1834"/>
    </location>
</feature>
<feature type="compositionally biased region" description="Basic and acidic residues" evidence="11">
    <location>
        <begin position="1866"/>
        <end position="1878"/>
    </location>
</feature>
<feature type="compositionally biased region" description="Polar residues" evidence="11">
    <location>
        <begin position="1899"/>
        <end position="1911"/>
    </location>
</feature>
<feature type="active site" description="Nucleophile; for GATase activity" evidence="9">
    <location>
        <position position="252"/>
    </location>
</feature>
<feature type="active site" description="For GATase activity" evidence="9">
    <location>
        <position position="336"/>
    </location>
</feature>
<feature type="active site" description="For GATase activity" evidence="9">
    <location>
        <position position="338"/>
    </location>
</feature>
<feature type="active site" description="For DHOase activity" evidence="3">
    <location>
        <position position="1686"/>
    </location>
</feature>
<feature type="binding site" evidence="5">
    <location>
        <position position="44"/>
    </location>
    <ligand>
        <name>L-glutamine</name>
        <dbReference type="ChEBI" id="CHEBI:58359"/>
    </ligand>
</feature>
<feature type="binding site" evidence="5">
    <location>
        <position position="222"/>
    </location>
    <ligand>
        <name>L-glutamine</name>
        <dbReference type="ChEBI" id="CHEBI:58359"/>
    </ligand>
</feature>
<feature type="binding site" evidence="5">
    <location>
        <position position="224"/>
    </location>
    <ligand>
        <name>L-glutamine</name>
        <dbReference type="ChEBI" id="CHEBI:58359"/>
    </ligand>
</feature>
<feature type="binding site" evidence="5">
    <location>
        <position position="253"/>
    </location>
    <ligand>
        <name>L-glutamine</name>
        <dbReference type="ChEBI" id="CHEBI:58359"/>
    </ligand>
</feature>
<feature type="binding site" evidence="5">
    <location>
        <position position="256"/>
    </location>
    <ligand>
        <name>L-glutamine</name>
        <dbReference type="ChEBI" id="CHEBI:58359"/>
    </ligand>
</feature>
<feature type="binding site" evidence="5">
    <location>
        <position position="294"/>
    </location>
    <ligand>
        <name>L-glutamine</name>
        <dbReference type="ChEBI" id="CHEBI:58359"/>
    </ligand>
</feature>
<feature type="binding site" evidence="5">
    <location>
        <position position="296"/>
    </location>
    <ligand>
        <name>L-glutamine</name>
        <dbReference type="ChEBI" id="CHEBI:58359"/>
    </ligand>
</feature>
<feature type="binding site" evidence="5">
    <location>
        <position position="297"/>
    </location>
    <ligand>
        <name>L-glutamine</name>
        <dbReference type="ChEBI" id="CHEBI:58359"/>
    </ligand>
</feature>
<feature type="binding site" evidence="2">
    <location>
        <position position="515"/>
    </location>
    <ligand>
        <name>ATP</name>
        <dbReference type="ChEBI" id="CHEBI:30616"/>
        <label>1</label>
    </ligand>
</feature>
<feature type="binding site" evidence="2">
    <location>
        <position position="555"/>
    </location>
    <ligand>
        <name>ATP</name>
        <dbReference type="ChEBI" id="CHEBI:30616"/>
        <label>1</label>
    </ligand>
</feature>
<feature type="binding site" evidence="2">
    <location>
        <position position="561"/>
    </location>
    <ligand>
        <name>ATP</name>
        <dbReference type="ChEBI" id="CHEBI:30616"/>
        <label>1</label>
    </ligand>
</feature>
<feature type="binding site" evidence="2">
    <location>
        <position position="562"/>
    </location>
    <ligand>
        <name>ATP</name>
        <dbReference type="ChEBI" id="CHEBI:30616"/>
        <label>1</label>
    </ligand>
</feature>
<feature type="binding site" evidence="2">
    <location>
        <position position="592"/>
    </location>
    <ligand>
        <name>ATP</name>
        <dbReference type="ChEBI" id="CHEBI:30616"/>
        <label>1</label>
    </ligand>
</feature>
<feature type="binding site" evidence="2">
    <location>
        <position position="599"/>
    </location>
    <ligand>
        <name>ATP</name>
        <dbReference type="ChEBI" id="CHEBI:30616"/>
        <label>1</label>
    </ligand>
</feature>
<feature type="binding site" evidence="2">
    <location>
        <position position="625"/>
    </location>
    <ligand>
        <name>ATP</name>
        <dbReference type="ChEBI" id="CHEBI:30616"/>
        <label>1</label>
    </ligand>
</feature>
<feature type="binding site" evidence="2">
    <location>
        <position position="626"/>
    </location>
    <ligand>
        <name>ATP</name>
        <dbReference type="ChEBI" id="CHEBI:30616"/>
        <label>1</label>
    </ligand>
</feature>
<feature type="binding site" evidence="2">
    <location>
        <position position="627"/>
    </location>
    <ligand>
        <name>ATP</name>
        <dbReference type="ChEBI" id="CHEBI:30616"/>
        <label>1</label>
    </ligand>
</feature>
<feature type="binding site" evidence="2">
    <location>
        <position position="668"/>
    </location>
    <ligand>
        <name>ATP</name>
        <dbReference type="ChEBI" id="CHEBI:30616"/>
        <label>1</label>
    </ligand>
</feature>
<feature type="binding site" evidence="8">
    <location>
        <position position="668"/>
    </location>
    <ligand>
        <name>Mg(2+)</name>
        <dbReference type="ChEBI" id="CHEBI:18420"/>
        <label>1</label>
    </ligand>
</feature>
<feature type="binding site" evidence="8">
    <location>
        <position position="668"/>
    </location>
    <ligand>
        <name>Mn(2+)</name>
        <dbReference type="ChEBI" id="CHEBI:29035"/>
        <label>1</label>
    </ligand>
</feature>
<feature type="binding site" evidence="2">
    <location>
        <position position="682"/>
    </location>
    <ligand>
        <name>ATP</name>
        <dbReference type="ChEBI" id="CHEBI:30616"/>
        <label>1</label>
    </ligand>
</feature>
<feature type="binding site" evidence="8">
    <location>
        <position position="682"/>
    </location>
    <ligand>
        <name>Mg(2+)</name>
        <dbReference type="ChEBI" id="CHEBI:18420"/>
        <label>1</label>
    </ligand>
</feature>
<feature type="binding site" evidence="8">
    <location>
        <position position="682"/>
    </location>
    <ligand>
        <name>Mg(2+)</name>
        <dbReference type="ChEBI" id="CHEBI:18420"/>
        <label>2</label>
    </ligand>
</feature>
<feature type="binding site" evidence="8">
    <location>
        <position position="682"/>
    </location>
    <ligand>
        <name>Mn(2+)</name>
        <dbReference type="ChEBI" id="CHEBI:29035"/>
        <label>1</label>
    </ligand>
</feature>
<feature type="binding site" evidence="8">
    <location>
        <position position="682"/>
    </location>
    <ligand>
        <name>Mn(2+)</name>
        <dbReference type="ChEBI" id="CHEBI:29035"/>
        <label>2</label>
    </ligand>
</feature>
<feature type="binding site" evidence="8">
    <location>
        <position position="684"/>
    </location>
    <ligand>
        <name>Mg(2+)</name>
        <dbReference type="ChEBI" id="CHEBI:18420"/>
        <label>2</label>
    </ligand>
</feature>
<feature type="binding site" evidence="8">
    <location>
        <position position="684"/>
    </location>
    <ligand>
        <name>Mn(2+)</name>
        <dbReference type="ChEBI" id="CHEBI:29035"/>
        <label>2</label>
    </ligand>
</feature>
<feature type="binding site" evidence="2">
    <location>
        <position position="1088"/>
    </location>
    <ligand>
        <name>ATP</name>
        <dbReference type="ChEBI" id="CHEBI:30616"/>
        <label>2</label>
    </ligand>
</feature>
<feature type="binding site" evidence="2">
    <location>
        <position position="1127"/>
    </location>
    <ligand>
        <name>ATP</name>
        <dbReference type="ChEBI" id="CHEBI:30616"/>
        <label>2</label>
    </ligand>
</feature>
<feature type="binding site" evidence="2">
    <location>
        <position position="1129"/>
    </location>
    <ligand>
        <name>ATP</name>
        <dbReference type="ChEBI" id="CHEBI:30616"/>
        <label>2</label>
    </ligand>
</feature>
<feature type="binding site" evidence="2">
    <location>
        <position position="1134"/>
    </location>
    <ligand>
        <name>ATP</name>
        <dbReference type="ChEBI" id="CHEBI:30616"/>
        <label>2</label>
    </ligand>
</feature>
<feature type="binding site" evidence="2">
    <location>
        <position position="1159"/>
    </location>
    <ligand>
        <name>ATP</name>
        <dbReference type="ChEBI" id="CHEBI:30616"/>
        <label>2</label>
    </ligand>
</feature>
<feature type="binding site" evidence="2">
    <location>
        <position position="1160"/>
    </location>
    <ligand>
        <name>ATP</name>
        <dbReference type="ChEBI" id="CHEBI:30616"/>
        <label>2</label>
    </ligand>
</feature>
<feature type="binding site" evidence="2">
    <location>
        <position position="1161"/>
    </location>
    <ligand>
        <name>ATP</name>
        <dbReference type="ChEBI" id="CHEBI:30616"/>
        <label>2</label>
    </ligand>
</feature>
<feature type="binding site" evidence="2">
    <location>
        <position position="1162"/>
    </location>
    <ligand>
        <name>ATP</name>
        <dbReference type="ChEBI" id="CHEBI:30616"/>
        <label>2</label>
    </ligand>
</feature>
<feature type="binding site" evidence="2">
    <location>
        <position position="1202"/>
    </location>
    <ligand>
        <name>ATP</name>
        <dbReference type="ChEBI" id="CHEBI:30616"/>
        <label>2</label>
    </ligand>
</feature>
<feature type="binding site" evidence="8">
    <location>
        <position position="1202"/>
    </location>
    <ligand>
        <name>Mg(2+)</name>
        <dbReference type="ChEBI" id="CHEBI:18420"/>
        <label>3</label>
    </ligand>
</feature>
<feature type="binding site" evidence="8">
    <location>
        <position position="1202"/>
    </location>
    <ligand>
        <name>Mn(2+)</name>
        <dbReference type="ChEBI" id="CHEBI:29035"/>
        <label>3</label>
    </ligand>
</feature>
<feature type="binding site" evidence="2">
    <location>
        <position position="1214"/>
    </location>
    <ligand>
        <name>ATP</name>
        <dbReference type="ChEBI" id="CHEBI:30616"/>
        <label>2</label>
    </ligand>
</feature>
<feature type="binding site" evidence="8">
    <location>
        <position position="1214"/>
    </location>
    <ligand>
        <name>Mg(2+)</name>
        <dbReference type="ChEBI" id="CHEBI:18420"/>
        <label>3</label>
    </ligand>
</feature>
<feature type="binding site" evidence="8">
    <location>
        <position position="1214"/>
    </location>
    <ligand>
        <name>Mg(2+)</name>
        <dbReference type="ChEBI" id="CHEBI:18420"/>
        <label>4</label>
    </ligand>
</feature>
<feature type="binding site" evidence="8">
    <location>
        <position position="1214"/>
    </location>
    <ligand>
        <name>Mn(2+)</name>
        <dbReference type="ChEBI" id="CHEBI:29035"/>
        <label>3</label>
    </ligand>
</feature>
<feature type="binding site" evidence="8">
    <location>
        <position position="1214"/>
    </location>
    <ligand>
        <name>Mn(2+)</name>
        <dbReference type="ChEBI" id="CHEBI:29035"/>
        <label>4</label>
    </ligand>
</feature>
<feature type="binding site" evidence="8">
    <location>
        <position position="1216"/>
    </location>
    <ligand>
        <name>Mg(2+)</name>
        <dbReference type="ChEBI" id="CHEBI:18420"/>
        <label>4</label>
    </ligand>
</feature>
<feature type="binding site" evidence="8">
    <location>
        <position position="1216"/>
    </location>
    <ligand>
        <name>Mn(2+)</name>
        <dbReference type="ChEBI" id="CHEBI:29035"/>
        <label>4</label>
    </ligand>
</feature>
<feature type="binding site" evidence="7">
    <location>
        <position position="1471"/>
    </location>
    <ligand>
        <name>Zn(2+)</name>
        <dbReference type="ChEBI" id="CHEBI:29105"/>
        <label>1</label>
    </ligand>
</feature>
<feature type="binding site" evidence="7">
    <location>
        <position position="1471"/>
    </location>
    <ligand>
        <name>Zn(2+)</name>
        <dbReference type="ChEBI" id="CHEBI:29105"/>
        <label>2</label>
    </ligand>
</feature>
<feature type="binding site" evidence="7">
    <location>
        <position position="1473"/>
    </location>
    <ligand>
        <name>Zn(2+)</name>
        <dbReference type="ChEBI" id="CHEBI:29105"/>
        <label>1</label>
    </ligand>
</feature>
<feature type="binding site" evidence="7">
    <location>
        <position position="1475"/>
    </location>
    <ligand>
        <name>(S)-dihydroorotate</name>
        <dbReference type="ChEBI" id="CHEBI:30864"/>
    </ligand>
</feature>
<feature type="binding site" evidence="7">
    <location>
        <position position="1505"/>
    </location>
    <ligand>
        <name>(S)-dihydroorotate</name>
        <dbReference type="ChEBI" id="CHEBI:30864"/>
    </ligand>
</feature>
<feature type="binding site" description="via carbamate group" evidence="7">
    <location>
        <position position="1556"/>
    </location>
    <ligand>
        <name>Zn(2+)</name>
        <dbReference type="ChEBI" id="CHEBI:29105"/>
        <label>1</label>
    </ligand>
</feature>
<feature type="binding site" description="via carbamate group" evidence="7">
    <location>
        <position position="1556"/>
    </location>
    <ligand>
        <name>Zn(2+)</name>
        <dbReference type="ChEBI" id="CHEBI:29105"/>
        <label>3</label>
    </ligand>
</feature>
<feature type="binding site" evidence="7">
    <location>
        <position position="1590"/>
    </location>
    <ligand>
        <name>Zn(2+)</name>
        <dbReference type="ChEBI" id="CHEBI:29105"/>
        <label>3</label>
    </ligand>
</feature>
<feature type="binding site" evidence="7">
    <location>
        <position position="1613"/>
    </location>
    <ligand>
        <name>Zn(2+)</name>
        <dbReference type="ChEBI" id="CHEBI:29105"/>
        <label>2</label>
    </ligand>
</feature>
<feature type="binding site" evidence="7">
    <location>
        <position position="1614"/>
    </location>
    <ligand>
        <name>Zn(2+)</name>
        <dbReference type="ChEBI" id="CHEBI:29105"/>
        <label>3</label>
    </ligand>
</feature>
<feature type="binding site" evidence="7">
    <location>
        <position position="1637"/>
    </location>
    <ligand>
        <name>Zn(2+)</name>
        <dbReference type="ChEBI" id="CHEBI:29105"/>
        <label>2</label>
    </ligand>
</feature>
<feature type="binding site" evidence="7">
    <location>
        <position position="1661"/>
    </location>
    <ligand>
        <name>(S)-dihydroorotate</name>
        <dbReference type="ChEBI" id="CHEBI:30864"/>
    </ligand>
</feature>
<feature type="binding site" evidence="7">
    <location>
        <position position="1686"/>
    </location>
    <ligand>
        <name>Zn(2+)</name>
        <dbReference type="ChEBI" id="CHEBI:29105"/>
        <label>1</label>
    </ligand>
</feature>
<feature type="binding site" evidence="7">
    <location>
        <position position="1690"/>
    </location>
    <ligand>
        <name>(S)-dihydroorotate</name>
        <dbReference type="ChEBI" id="CHEBI:30864"/>
    </ligand>
</feature>
<feature type="binding site" evidence="7">
    <location>
        <position position="1702"/>
    </location>
    <ligand>
        <name>(S)-dihydroorotate</name>
        <dbReference type="ChEBI" id="CHEBI:30864"/>
    </ligand>
</feature>
<feature type="binding site" evidence="6">
    <location>
        <position position="1975"/>
    </location>
    <ligand>
        <name>carbamoyl phosphate</name>
        <dbReference type="ChEBI" id="CHEBI:58228"/>
    </ligand>
</feature>
<feature type="binding site" evidence="6">
    <location>
        <position position="1976"/>
    </location>
    <ligand>
        <name>carbamoyl phosphate</name>
        <dbReference type="ChEBI" id="CHEBI:58228"/>
    </ligand>
</feature>
<feature type="binding site" evidence="6">
    <location>
        <position position="2003"/>
    </location>
    <ligand>
        <name>L-aspartate</name>
        <dbReference type="ChEBI" id="CHEBI:29991"/>
    </ligand>
</feature>
<feature type="binding site" evidence="6">
    <location>
        <position position="2024"/>
    </location>
    <ligand>
        <name>carbamoyl phosphate</name>
        <dbReference type="ChEBI" id="CHEBI:58228"/>
    </ligand>
</feature>
<feature type="binding site" evidence="6">
    <location>
        <position position="2052"/>
    </location>
    <ligand>
        <name>carbamoyl phosphate</name>
        <dbReference type="ChEBI" id="CHEBI:58228"/>
    </ligand>
</feature>
<feature type="binding site" evidence="6">
    <location>
        <position position="2055"/>
    </location>
    <ligand>
        <name>carbamoyl phosphate</name>
        <dbReference type="ChEBI" id="CHEBI:58228"/>
    </ligand>
</feature>
<feature type="binding site" evidence="6">
    <location>
        <position position="2085"/>
    </location>
    <ligand>
        <name>L-aspartate</name>
        <dbReference type="ChEBI" id="CHEBI:29991"/>
    </ligand>
</feature>
<feature type="binding site" evidence="6">
    <location>
        <position position="2146"/>
    </location>
    <ligand>
        <name>L-aspartate</name>
        <dbReference type="ChEBI" id="CHEBI:29991"/>
    </ligand>
</feature>
<feature type="binding site" evidence="6">
    <location>
        <position position="2185"/>
    </location>
    <ligand>
        <name>carbamoyl phosphate</name>
        <dbReference type="ChEBI" id="CHEBI:58228"/>
    </ligand>
</feature>
<feature type="binding site" evidence="6">
    <location>
        <position position="2186"/>
    </location>
    <ligand>
        <name>carbamoyl phosphate</name>
        <dbReference type="ChEBI" id="CHEBI:58228"/>
    </ligand>
</feature>
<feature type="modified residue" description="N-acetylalanine" evidence="7">
    <location>
        <position position="2"/>
    </location>
</feature>
<feature type="modified residue" description="Phosphothreonine; by MAPK1" evidence="7">
    <location>
        <position position="456"/>
    </location>
</feature>
<feature type="modified residue" description="N6-acetyllysine" evidence="7">
    <location>
        <position position="747"/>
    </location>
</feature>
<feature type="modified residue" description="Phosphoserine" evidence="7">
    <location>
        <position position="1038"/>
    </location>
</feature>
<feature type="modified residue" description="Phosphoserine; by PKA" evidence="13">
    <location>
        <position position="1406"/>
    </location>
</feature>
<feature type="modified residue" description="N6-acetyllysine" evidence="7">
    <location>
        <position position="1411"/>
    </location>
</feature>
<feature type="modified residue" description="N6-carboxylysine" evidence="7">
    <location>
        <position position="1556"/>
    </location>
</feature>
<feature type="modified residue" description="Phosphoserine; by RPS6KB1 and PKA" evidence="7">
    <location>
        <position position="1859"/>
    </location>
</feature>
<feature type="modified residue" description="Phosphoserine; by PKC; in vitro" evidence="7">
    <location>
        <position position="1873"/>
    </location>
</feature>
<feature type="modified residue" description="Phosphothreonine" evidence="7">
    <location>
        <position position="1884"/>
    </location>
</feature>
<feature type="modified residue" description="Phosphoserine" evidence="7">
    <location>
        <position position="1900"/>
    </location>
</feature>
<feature type="modified residue" description="Phosphoserine" evidence="7">
    <location>
        <position position="1938"/>
    </location>
</feature>
<feature type="mutagenesis site" description="No effect on enzyme kinetics." evidence="13">
    <original>S</original>
    <variation>A</variation>
    <location>
        <position position="1406"/>
    </location>
</feature>
<feature type="mutagenesis site" description="Increases CPSase activity and reduces sensitivity to feedback inhibition by UTP." evidence="13">
    <original>S</original>
    <variation>D</variation>
    <location>
        <position position="1406"/>
    </location>
</feature>
<name>PYR1_MESAU</name>
<gene>
    <name type="primary">CAD</name>
</gene>
<keyword id="KW-0007">Acetylation</keyword>
<keyword id="KW-0021">Allosteric enzyme</keyword>
<keyword id="KW-0067">ATP-binding</keyword>
<keyword id="KW-0963">Cytoplasm</keyword>
<keyword id="KW-0903">Direct protein sequencing</keyword>
<keyword id="KW-0315">Glutamine amidotransferase</keyword>
<keyword id="KW-0378">Hydrolase</keyword>
<keyword id="KW-0436">Ligase</keyword>
<keyword id="KW-0460">Magnesium</keyword>
<keyword id="KW-0464">Manganese</keyword>
<keyword id="KW-0479">Metal-binding</keyword>
<keyword id="KW-0511">Multifunctional enzyme</keyword>
<keyword id="KW-0547">Nucleotide-binding</keyword>
<keyword id="KW-0539">Nucleus</keyword>
<keyword id="KW-0597">Phosphoprotein</keyword>
<keyword id="KW-0665">Pyrimidine biosynthesis</keyword>
<keyword id="KW-1185">Reference proteome</keyword>
<keyword id="KW-0677">Repeat</keyword>
<keyword id="KW-0808">Transferase</keyword>
<keyword id="KW-0862">Zinc</keyword>
<sequence>MAALVLEDGSVLQGRPFGAAVSTAGEVVFQTGMVGYPEALTDPSYKAQILVLTYPLIGNYGIPSDEEDEFGLSKWFESSENHVAGLVVGECCPTPSHWSATCTLHEWLQQHGIPGLQGVDTRELTKKLREQGSLLGKLVQSGTEPSTLPFVDPNARPLAPEVSIKTPRVFNAGGAPRICALDCGLKYNQIRCLCQLGAEVTVVPWNHELDSQKYDGLFLSNGPGDPASYPGVVATLNRVLSEPNPRPVFGICLGHQLLALAIGAKTYKMRYGNRGHNQPCLLVGTGRCFLTSQNHGFAVDADSLPAGWTPLFTNANDCSNEGIVHDSLPFFSVQFHPEHRAGPSDMELLFDVFLETVREAVAGNPGGQTVKERLVQRLCPPGLLIPGSGLPPPRKVLILGSGGLSIGQAGEFDYSGSQAIKALKEENIQTLLINPNIATVQTSQGLADKVYFLPITPHYVTQVIRNERPDGVLLTFGGQTALNCGVELTKAGVLARYGVRVLGTPVETIELTEDRRAFAARMAEIGEHVAPSEAANSLEQAQAAAERLGYPVLVRAAFALGGLGSGFASTKEELSALVAPAFAHTSQVLIDKSLKGWKEIEYEVVRDAYGNCVTVCNMENLDPLGIHTGESIVVAPSQTLNDREYQLLRRTAIKVTQHLGIVGECNVQYALNPESEQYYIIEVNARLSRSSALASKATGYPLAYVAAKLALGIPLPELRNSVTGGTAAFEPSLDYCVVKIPRWDLSKFLRVSTKIGSCMKSVGEVMGIGRSFEEAFQKALRMVDENCVGFDHTVKPVSDVELETPTDKRIFVVAAALWAGYSVERLYELTRIDCWFLHRMKRIVTHAQLLEQHRGQPLSQDLLHQAKCLGFSDKQIALAVLSTELAVRKLRQELGICPAVKQIDTVAAEWPAQTNYLYLTYWGNTHDLDFRTPHVLVLGSGVYRIGSSVEFDWCAVGCIQQLRKMGYKTIMVNYNPETVSTDYDMCDRLYFDEISFEVVMDIYELENPDGVILSMGGQLPNNMAMALHRQQCRVLGTSPEAIDSAENRFKFSRLLDTIGISQPQWRELSDLESARQFCQTVGYPCVVRPSYVLSGAAMNVAYTDGDLERFLSSAAAVSKEHPVVISKFIQEAKEIDVDAVACDGVVSAIAISEHVENAGVHSGDATLVTPPQDITPKTLERIKAIVHAVGQELQVTGPFNLQLIAKDDQLKVIECNVRVSRSFPFVSKTLGVDLVALATRIIMGEKVEPIGLMTGSGVVGVKVPQFSFSRLAGADVVLGVEMTSTGEVAGFGESRCEAYLKAMLSTGFKIPKKNILLTIGSYKNKSELLPTVRLLESLGYSLYASLGTADFYTEHGVKVTAVDWHFEEAVDGECPPQRSILDQLAENHFELVINLSMRGAGGRRLSSFVTKGYRTRRLAADFSVPLIIDIKCTKLFVEALGQIGPAPPLKVHVDCMTSQKLVRLPGLIDVHVHLREPGGTHKEDFASGTAAALAGGVTMVCAMPNTRPPIIDAPALALAQKLAEAGARCDFALFLGASSENAGTLGAVAGSAAGLKLYLNETFSELRLDSVAQWMEHFETWPSHLPIVAHAERQSVAAVLMVAQLTQRPVHICHVARKEEILLIKTAKAQGLPVTCEVAPHHLFLNREDLERLGPGRGEVRPELGSREDMEALWENMAVIDCFASDHAPHTLEEKCGPKPPPGFPGLETMLPLLLTAVSEGRLSLDDLLQRLHHNPRRIFHLPLQEDTYVEVDLEHEWTIPSHMPFSKARWTPFEGQKVKGTIRRVVLRGEVAYIDGQVLVPPGYGQDVRKWPQGAVPQPPPSAPATTEITTTPERPRRVIPGLPDGRFHLPPRIHRASDPGLPAEEPKEKPSRKVVEPELMGTPDGPCYPAPPVPRQASPQNLGSSGLLHPQTSPLLHSLVGQHILSVKQFTKDQMSHLFNVAHTLRMMVQKERSLDILKGKVMASMFYEVSTRTSSSFAAAMARLGGAVLSFSEATSSVQKGESLADSVQTMSCYADVVVLRHPQPGAVELAAKHCRRPVINAGDGVGEHPTQALLDIFTIREELGTVNGMTITMVGDLKHGRTVHSLACLLTQYRVSLRYVAPPSLRMPPSVWDFVASRGTKQEEFESIEEALPDTDVLYMTRIQKERFGSTQEYEACFGQFILTPHIMTRAKKKMVVMHPMPRVNEISVEVDSDPRAAYFRQAENGMYIRMALLATVLGRF</sequence>
<protein>
    <recommendedName>
        <fullName evidence="15">Multifunctional protein CAD</fullName>
    </recommendedName>
    <alternativeName>
        <fullName>Carbamoyl phosphate synthetase 2-aspartate transcarbamylase-dihydroorotase</fullName>
    </alternativeName>
    <domain>
        <recommendedName>
            <fullName>Glutamine-dependent carbamoyl phosphate synthase</fullName>
            <ecNumber evidence="13">6.3.5.5</ecNumber>
        </recommendedName>
    </domain>
    <domain>
        <recommendedName>
            <fullName>Glutamine amidotransferase</fullName>
            <shortName>GATase</shortName>
            <shortName>GLNase</shortName>
            <ecNumber evidence="4">3.5.1.2</ecNumber>
        </recommendedName>
    </domain>
    <domain>
        <recommendedName>
            <fullName>Ammonium-dependent carbamoyl phosphate synthase</fullName>
            <shortName>CPS</shortName>
            <shortName>CPSase</shortName>
            <ecNumber evidence="4">6.3.4.16</ecNumber>
        </recommendedName>
    </domain>
    <domain>
        <recommendedName>
            <fullName>Aspartate carbamoyltransferase</fullName>
            <ecNumber evidence="13">2.1.3.2</ecNumber>
        </recommendedName>
    </domain>
    <domain>
        <recommendedName>
            <fullName>Dihydroorotase</fullName>
            <ecNumber evidence="13">3.5.2.3</ecNumber>
        </recommendedName>
    </domain>
</protein>
<proteinExistence type="evidence at protein level"/>
<comment type="function">
    <text evidence="13">Multifunctional protein that encodes the first 3 enzymatic activities of the de novo pyrimidine pathway: carbamoylphosphate synthetase (CPSase; EC 6.3.5.5), aspartate transcarbamylase (ATCase; EC 2.1.3.2) and dihydroorotase (DHOase; EC 3.5.2.3). The CPSase-function is accomplished in 2 steps, by a glutamine-dependent amidotransferase activity (GATase) that binds and cleaves glutamine to produce ammonia, followed by an ammonium-dependent carbamoyl phosphate synthetase, which reacts with the ammonia, hydrogencarbonate and ATP to form carbamoyl phosphate. The endogenously produced carbamoyl phosphate is sequestered and channeled to the ATCase active site. ATCase then catalyzes the formation of carbamoyl-L-aspartate from L-aspartate and carbamoyl phosphate. In the last step, DHOase catalyzes the cyclization of carbamoyl aspartate to dihydroorotate.</text>
</comment>
<comment type="catalytic activity">
    <reaction evidence="13">
        <text>hydrogencarbonate + L-glutamine + 2 ATP + H2O = carbamoyl phosphate + L-glutamate + 2 ADP + phosphate + 2 H(+)</text>
        <dbReference type="Rhea" id="RHEA:18633"/>
        <dbReference type="ChEBI" id="CHEBI:15377"/>
        <dbReference type="ChEBI" id="CHEBI:15378"/>
        <dbReference type="ChEBI" id="CHEBI:17544"/>
        <dbReference type="ChEBI" id="CHEBI:29985"/>
        <dbReference type="ChEBI" id="CHEBI:30616"/>
        <dbReference type="ChEBI" id="CHEBI:43474"/>
        <dbReference type="ChEBI" id="CHEBI:58228"/>
        <dbReference type="ChEBI" id="CHEBI:58359"/>
        <dbReference type="ChEBI" id="CHEBI:456216"/>
        <dbReference type="EC" id="6.3.5.5"/>
    </reaction>
</comment>
<comment type="catalytic activity">
    <reaction evidence="4">
        <text>L-glutamine + H2O = L-glutamate + NH4(+)</text>
        <dbReference type="Rhea" id="RHEA:15889"/>
        <dbReference type="ChEBI" id="CHEBI:15377"/>
        <dbReference type="ChEBI" id="CHEBI:28938"/>
        <dbReference type="ChEBI" id="CHEBI:29985"/>
        <dbReference type="ChEBI" id="CHEBI:58359"/>
        <dbReference type="EC" id="3.5.1.2"/>
    </reaction>
</comment>
<comment type="catalytic activity">
    <reaction evidence="4">
        <text>hydrogencarbonate + NH4(+) + 2 ATP = carbamoyl phosphate + 2 ADP + phosphate + 2 H(+)</text>
        <dbReference type="Rhea" id="RHEA:18029"/>
        <dbReference type="ChEBI" id="CHEBI:15378"/>
        <dbReference type="ChEBI" id="CHEBI:17544"/>
        <dbReference type="ChEBI" id="CHEBI:28938"/>
        <dbReference type="ChEBI" id="CHEBI:30616"/>
        <dbReference type="ChEBI" id="CHEBI:43474"/>
        <dbReference type="ChEBI" id="CHEBI:58228"/>
        <dbReference type="ChEBI" id="CHEBI:456216"/>
        <dbReference type="EC" id="6.3.4.16"/>
    </reaction>
</comment>
<comment type="catalytic activity">
    <reaction evidence="13">
        <text>carbamoyl phosphate + L-aspartate = N-carbamoyl-L-aspartate + phosphate + H(+)</text>
        <dbReference type="Rhea" id="RHEA:20013"/>
        <dbReference type="ChEBI" id="CHEBI:15378"/>
        <dbReference type="ChEBI" id="CHEBI:29991"/>
        <dbReference type="ChEBI" id="CHEBI:32814"/>
        <dbReference type="ChEBI" id="CHEBI:43474"/>
        <dbReference type="ChEBI" id="CHEBI:58228"/>
        <dbReference type="EC" id="2.1.3.2"/>
    </reaction>
</comment>
<comment type="catalytic activity">
    <reaction evidence="13">
        <text>(S)-dihydroorotate + H2O = N-carbamoyl-L-aspartate + H(+)</text>
        <dbReference type="Rhea" id="RHEA:24296"/>
        <dbReference type="ChEBI" id="CHEBI:15377"/>
        <dbReference type="ChEBI" id="CHEBI:15378"/>
        <dbReference type="ChEBI" id="CHEBI:30864"/>
        <dbReference type="ChEBI" id="CHEBI:32814"/>
        <dbReference type="EC" id="3.5.2.3"/>
    </reaction>
</comment>
<comment type="cofactor">
    <cofactor evidence="7">
        <name>Zn(2+)</name>
        <dbReference type="ChEBI" id="CHEBI:29105"/>
    </cofactor>
    <text evidence="7">Binds 3 Zn(2+) ions per subunit (for dihydroorotase activity).</text>
</comment>
<comment type="cofactor">
    <cofactor evidence="8">
        <name>Mg(2+)</name>
        <dbReference type="ChEBI" id="CHEBI:18420"/>
    </cofactor>
    <cofactor evidence="8">
        <name>Mn(2+)</name>
        <dbReference type="ChEBI" id="CHEBI:29035"/>
    </cofactor>
    <text evidence="8">Binds 4 magnesium or manganese ions per subunit.</text>
</comment>
<comment type="activity regulation">
    <text>Allosterically regulated and controlled by phosphorylation. 5-phosphoribose 1-diphosphate (PRPP) is an activator while UMP and UTP are inhibitors of the CPSase reaction.</text>
</comment>
<comment type="pathway">
    <text>Pyrimidine metabolism; UMP biosynthesis via de novo pathway; (S)-dihydroorotate from bicarbonate: step 1/3.</text>
</comment>
<comment type="pathway">
    <text>Pyrimidine metabolism; UMP biosynthesis via de novo pathway; (S)-dihydroorotate from bicarbonate: step 2/3.</text>
</comment>
<comment type="pathway">
    <text>Pyrimidine metabolism; UMP biosynthesis via de novo pathway; (S)-dihydroorotate from bicarbonate: step 3/3.</text>
</comment>
<comment type="subunit">
    <text evidence="7 12">Homohexamer (PubMed:2995985). Interacts with CIPC (By similarity).</text>
</comment>
<comment type="subcellular location">
    <subcellularLocation>
        <location>Cytoplasm</location>
    </subcellularLocation>
    <subcellularLocation>
        <location evidence="1">Nucleus</location>
    </subcellularLocation>
    <text evidence="1">Cytosolic and unphosphorylated in resting cells, translocates to the nucleus in response to EGF stimulation, nuclear import promotes optimal cell growth.</text>
</comment>
<comment type="PTM">
    <text evidence="1 13">Activated by MAP kinase (Erk1/2) phosphorylation just prior to the S phase of the cell cycle, when the demand for pyrimidine nucleotides is greatest, and down-regulated as the cells emerge from S phase by protein kinase A (PKA) phosphorylation. Phosphorylation at Ser-1859 by RPS6KB1 downstream of MTOR promotes oligomerization and stimulates dihydroorotase activity (By similarity). Phosphorylation at Ser-1406 reduces sensitivity to feedback inhibition by UTP.</text>
</comment>
<comment type="miscellaneous">
    <text evidence="4">GATase (glutamine amidotransferase) and CPSase (carbamoyl phosphate synthase) form together the glutamine-dependent CPSase (GD-CPSase) (EC 6.3.5.5).</text>
</comment>
<comment type="similarity">
    <text evidence="15">In the N-terminal section; belongs to the CarA family.</text>
</comment>
<comment type="similarity">
    <text evidence="15">In the 2nd section; belongs to the CarB family.</text>
</comment>
<comment type="similarity">
    <text evidence="15">In the 3rd section; belongs to the metallo-dependent hydrolases superfamily. DHOase family. CAD subfamily.</text>
</comment>
<comment type="similarity">
    <text evidence="15">In the C-terminal section; belongs to the aspartate/ornithine carbamoyltransferase superfamily. ATCase family.</text>
</comment>
<evidence type="ECO:0000250" key="1"/>
<evidence type="ECO:0000250" key="2">
    <source>
        <dbReference type="UniProtKB" id="P00968"/>
    </source>
</evidence>
<evidence type="ECO:0000250" key="3">
    <source>
        <dbReference type="UniProtKB" id="P05020"/>
    </source>
</evidence>
<evidence type="ECO:0000250" key="4">
    <source>
        <dbReference type="UniProtKB" id="P07259"/>
    </source>
</evidence>
<evidence type="ECO:0000250" key="5">
    <source>
        <dbReference type="UniProtKB" id="P0A6F1"/>
    </source>
</evidence>
<evidence type="ECO:0000250" key="6">
    <source>
        <dbReference type="UniProtKB" id="P0A786"/>
    </source>
</evidence>
<evidence type="ECO:0000250" key="7">
    <source>
        <dbReference type="UniProtKB" id="P27708"/>
    </source>
</evidence>
<evidence type="ECO:0000255" key="8">
    <source>
        <dbReference type="PROSITE-ProRule" id="PRU00409"/>
    </source>
</evidence>
<evidence type="ECO:0000255" key="9">
    <source>
        <dbReference type="PROSITE-ProRule" id="PRU00605"/>
    </source>
</evidence>
<evidence type="ECO:0000255" key="10">
    <source>
        <dbReference type="PROSITE-ProRule" id="PRU01202"/>
    </source>
</evidence>
<evidence type="ECO:0000256" key="11">
    <source>
        <dbReference type="SAM" id="MobiDB-lite"/>
    </source>
</evidence>
<evidence type="ECO:0000269" key="12">
    <source>
    </source>
</evidence>
<evidence type="ECO:0000269" key="13">
    <source>
    </source>
</evidence>
<evidence type="ECO:0000303" key="14">
    <source>
    </source>
</evidence>
<evidence type="ECO:0000305" key="15"/>
<dbReference type="EC" id="6.3.5.5" evidence="13"/>
<dbReference type="EC" id="3.5.1.2" evidence="4"/>
<dbReference type="EC" id="6.3.4.16" evidence="4"/>
<dbReference type="EC" id="2.1.3.2" evidence="13"/>
<dbReference type="EC" id="3.5.2.3" evidence="13"/>
<dbReference type="EMBL" id="J05503">
    <property type="protein sequence ID" value="AAA37062.1"/>
    <property type="molecule type" value="mRNA"/>
</dbReference>
<dbReference type="EMBL" id="M28866">
    <property type="protein sequence ID" value="AAA37073.1"/>
    <property type="molecule type" value="mRNA"/>
</dbReference>
<dbReference type="EMBL" id="M60078">
    <property type="protein sequence ID" value="AAA63617.1"/>
    <property type="molecule type" value="mRNA"/>
</dbReference>
<dbReference type="EMBL" id="M11242">
    <property type="protein sequence ID" value="AAA37061.1"/>
    <property type="molecule type" value="mRNA"/>
</dbReference>
<dbReference type="EMBL" id="M23652">
    <property type="protein sequence ID" value="AAA37064.1"/>
    <property type="molecule type" value="mRNA"/>
</dbReference>
<dbReference type="EMBL" id="M21927">
    <property type="protein sequence ID" value="AAA37063.1"/>
    <property type="molecule type" value="mRNA"/>
</dbReference>
<dbReference type="PIR" id="A38653">
    <property type="entry name" value="A23443"/>
</dbReference>
<dbReference type="SMR" id="P08955"/>
<dbReference type="STRING" id="10036.ENSMAUP00000003134"/>
<dbReference type="MEROPS" id="M38.972"/>
<dbReference type="iPTMnet" id="P08955"/>
<dbReference type="eggNOG" id="KOG0370">
    <property type="taxonomic scope" value="Eukaryota"/>
</dbReference>
<dbReference type="BRENDA" id="3.5.2.3">
    <property type="organism ID" value="3239"/>
</dbReference>
<dbReference type="SABIO-RK" id="P08955"/>
<dbReference type="UniPathway" id="UPA00070">
    <property type="reaction ID" value="UER00115"/>
</dbReference>
<dbReference type="UniPathway" id="UPA00070">
    <property type="reaction ID" value="UER00116"/>
</dbReference>
<dbReference type="UniPathway" id="UPA00070">
    <property type="reaction ID" value="UER00117"/>
</dbReference>
<dbReference type="Proteomes" id="UP000189706">
    <property type="component" value="Unplaced"/>
</dbReference>
<dbReference type="GO" id="GO:0005951">
    <property type="term" value="C:carbamoyl-phosphate synthase complex"/>
    <property type="evidence" value="ECO:0007669"/>
    <property type="project" value="TreeGrafter"/>
</dbReference>
<dbReference type="GO" id="GO:0005737">
    <property type="term" value="C:cytoplasm"/>
    <property type="evidence" value="ECO:0000314"/>
    <property type="project" value="MGI"/>
</dbReference>
<dbReference type="GO" id="GO:0005829">
    <property type="term" value="C:cytosol"/>
    <property type="evidence" value="ECO:0000314"/>
    <property type="project" value="BHF-UCL"/>
</dbReference>
<dbReference type="GO" id="GO:0005739">
    <property type="term" value="C:mitochondrion"/>
    <property type="evidence" value="ECO:0000314"/>
    <property type="project" value="BHF-UCL"/>
</dbReference>
<dbReference type="GO" id="GO:0016363">
    <property type="term" value="C:nuclear matrix"/>
    <property type="evidence" value="ECO:0000314"/>
    <property type="project" value="BHF-UCL"/>
</dbReference>
<dbReference type="GO" id="GO:0005634">
    <property type="term" value="C:nucleus"/>
    <property type="evidence" value="ECO:0000314"/>
    <property type="project" value="MGI"/>
</dbReference>
<dbReference type="GO" id="GO:0070335">
    <property type="term" value="F:aspartate binding"/>
    <property type="evidence" value="ECO:0000314"/>
    <property type="project" value="BHF-UCL"/>
</dbReference>
<dbReference type="GO" id="GO:0004070">
    <property type="term" value="F:aspartate carbamoyltransferase activity"/>
    <property type="evidence" value="ECO:0000314"/>
    <property type="project" value="BHF-UCL"/>
</dbReference>
<dbReference type="GO" id="GO:0005524">
    <property type="term" value="F:ATP binding"/>
    <property type="evidence" value="ECO:0000314"/>
    <property type="project" value="BHF-UCL"/>
</dbReference>
<dbReference type="GO" id="GO:0004087">
    <property type="term" value="F:carbamoyl-phosphate synthase (ammonia) activity"/>
    <property type="evidence" value="ECO:0007669"/>
    <property type="project" value="RHEA"/>
</dbReference>
<dbReference type="GO" id="GO:0004088">
    <property type="term" value="F:carbamoyl-phosphate synthase (glutamine-hydrolyzing) activity"/>
    <property type="evidence" value="ECO:0000314"/>
    <property type="project" value="BHF-UCL"/>
</dbReference>
<dbReference type="GO" id="GO:0004151">
    <property type="term" value="F:dihydroorotase activity"/>
    <property type="evidence" value="ECO:0000314"/>
    <property type="project" value="BHF-UCL"/>
</dbReference>
<dbReference type="GO" id="GO:0004359">
    <property type="term" value="F:glutaminase activity"/>
    <property type="evidence" value="ECO:0007669"/>
    <property type="project" value="RHEA"/>
</dbReference>
<dbReference type="GO" id="GO:0004672">
    <property type="term" value="F:protein kinase activity"/>
    <property type="evidence" value="ECO:0000314"/>
    <property type="project" value="BHF-UCL"/>
</dbReference>
<dbReference type="GO" id="GO:0002134">
    <property type="term" value="F:UTP binding"/>
    <property type="evidence" value="ECO:0000314"/>
    <property type="project" value="MGI"/>
</dbReference>
<dbReference type="GO" id="GO:0008270">
    <property type="term" value="F:zinc ion binding"/>
    <property type="evidence" value="ECO:0000250"/>
    <property type="project" value="UniProtKB"/>
</dbReference>
<dbReference type="GO" id="GO:0006207">
    <property type="term" value="P:'de novo' pyrimidine nucleobase biosynthetic process"/>
    <property type="evidence" value="ECO:0000314"/>
    <property type="project" value="BHF-UCL"/>
</dbReference>
<dbReference type="GO" id="GO:0044205">
    <property type="term" value="P:'de novo' UMP biosynthetic process"/>
    <property type="evidence" value="ECO:0007669"/>
    <property type="project" value="UniProtKB-UniPathway"/>
</dbReference>
<dbReference type="GO" id="GO:0006541">
    <property type="term" value="P:glutamine metabolic process"/>
    <property type="evidence" value="ECO:0000314"/>
    <property type="project" value="BHF-UCL"/>
</dbReference>
<dbReference type="GO" id="GO:0006526">
    <property type="term" value="P:L-arginine biosynthetic process"/>
    <property type="evidence" value="ECO:0007669"/>
    <property type="project" value="TreeGrafter"/>
</dbReference>
<dbReference type="GO" id="GO:0018107">
    <property type="term" value="P:peptidyl-threonine phosphorylation"/>
    <property type="evidence" value="ECO:0000314"/>
    <property type="project" value="MGI"/>
</dbReference>
<dbReference type="GO" id="GO:0046777">
    <property type="term" value="P:protein autophosphorylation"/>
    <property type="evidence" value="ECO:0000314"/>
    <property type="project" value="MGI"/>
</dbReference>
<dbReference type="CDD" id="cd01316">
    <property type="entry name" value="CAD_DHOase"/>
    <property type="match status" value="1"/>
</dbReference>
<dbReference type="CDD" id="cd01744">
    <property type="entry name" value="GATase1_CPSase"/>
    <property type="match status" value="1"/>
</dbReference>
<dbReference type="CDD" id="cd01423">
    <property type="entry name" value="MGS_CPS_I_III"/>
    <property type="match status" value="1"/>
</dbReference>
<dbReference type="FunFam" id="3.40.50.1370:FF:000002">
    <property type="entry name" value="Aspartate carbamoyltransferase 2"/>
    <property type="match status" value="1"/>
</dbReference>
<dbReference type="FunFam" id="3.20.20.140:FF:000015">
    <property type="entry name" value="CAD protein isoform X2"/>
    <property type="match status" value="1"/>
</dbReference>
<dbReference type="FunFam" id="3.40.50.1370:FF:000005">
    <property type="entry name" value="CAD protein-like isoform X1"/>
    <property type="match status" value="1"/>
</dbReference>
<dbReference type="FunFam" id="3.40.50.1380:FF:000005">
    <property type="entry name" value="CAD protein-like isoform X1"/>
    <property type="match status" value="1"/>
</dbReference>
<dbReference type="FunFam" id="3.40.50.20:FF:000011">
    <property type="entry name" value="CAD protein-like isoform X1"/>
    <property type="match status" value="1"/>
</dbReference>
<dbReference type="FunFam" id="3.30.470.20:FF:000004">
    <property type="entry name" value="Carbamoyl-phosphate synthase (glutamine-hydrolyzing)"/>
    <property type="match status" value="1"/>
</dbReference>
<dbReference type="FunFam" id="3.40.50.880:FF:000006">
    <property type="entry name" value="Carbamoyl-phosphate synthase 1, mitochondrial"/>
    <property type="match status" value="1"/>
</dbReference>
<dbReference type="FunFam" id="3.50.30.20:FF:000002">
    <property type="entry name" value="Carbamoyl-phosphate synthase 1, mitochondrial"/>
    <property type="match status" value="1"/>
</dbReference>
<dbReference type="FunFam" id="1.10.1030.10:FF:000001">
    <property type="entry name" value="Carbamoyl-phosphate synthase large chain"/>
    <property type="match status" value="1"/>
</dbReference>
<dbReference type="FunFam" id="3.30.1490.20:FF:000001">
    <property type="entry name" value="Carbamoyl-phosphate synthase large chain"/>
    <property type="match status" value="1"/>
</dbReference>
<dbReference type="FunFam" id="3.30.470.20:FF:000001">
    <property type="entry name" value="Carbamoyl-phosphate synthase large chain"/>
    <property type="match status" value="1"/>
</dbReference>
<dbReference type="FunFam" id="3.40.50.20:FF:000002">
    <property type="entry name" value="Carbamoyl-phosphate synthase large chain"/>
    <property type="match status" value="1"/>
</dbReference>
<dbReference type="Gene3D" id="3.40.50.20">
    <property type="match status" value="2"/>
</dbReference>
<dbReference type="Gene3D" id="3.40.50.880">
    <property type="match status" value="1"/>
</dbReference>
<dbReference type="Gene3D" id="3.40.50.1370">
    <property type="entry name" value="Aspartate/ornithine carbamoyltransferase"/>
    <property type="match status" value="2"/>
</dbReference>
<dbReference type="Gene3D" id="3.30.1490.20">
    <property type="entry name" value="ATP-grasp fold, A domain"/>
    <property type="match status" value="1"/>
</dbReference>
<dbReference type="Gene3D" id="3.30.470.20">
    <property type="entry name" value="ATP-grasp fold, B domain"/>
    <property type="match status" value="2"/>
</dbReference>
<dbReference type="Gene3D" id="3.50.30.20">
    <property type="entry name" value="Carbamoyl-phosphate synthase small subunit, N-terminal domain"/>
    <property type="match status" value="1"/>
</dbReference>
<dbReference type="Gene3D" id="1.10.1030.10">
    <property type="entry name" value="Carbamoyl-phosphate synthetase, large subunit oligomerisation domain"/>
    <property type="match status" value="1"/>
</dbReference>
<dbReference type="Gene3D" id="3.20.20.140">
    <property type="entry name" value="Metal-dependent hydrolases"/>
    <property type="match status" value="1"/>
</dbReference>
<dbReference type="Gene3D" id="3.40.50.1380">
    <property type="entry name" value="Methylglyoxal synthase-like domain"/>
    <property type="match status" value="1"/>
</dbReference>
<dbReference type="HAMAP" id="MF_00001">
    <property type="entry name" value="Asp_carb_tr"/>
    <property type="match status" value="1"/>
</dbReference>
<dbReference type="HAMAP" id="MF_01209">
    <property type="entry name" value="CPSase_S_chain"/>
    <property type="match status" value="1"/>
</dbReference>
<dbReference type="InterPro" id="IPR006680">
    <property type="entry name" value="Amidohydro-rel"/>
</dbReference>
<dbReference type="InterPro" id="IPR006132">
    <property type="entry name" value="Asp/Orn_carbamoyltranf_P-bd"/>
</dbReference>
<dbReference type="InterPro" id="IPR006130">
    <property type="entry name" value="Asp/Orn_carbamoylTrfase"/>
</dbReference>
<dbReference type="InterPro" id="IPR036901">
    <property type="entry name" value="Asp/Orn_carbamoylTrfase_sf"/>
</dbReference>
<dbReference type="InterPro" id="IPR002082">
    <property type="entry name" value="Asp_carbamoyltransf"/>
</dbReference>
<dbReference type="InterPro" id="IPR006131">
    <property type="entry name" value="Asp_carbamoyltransf_Asp/Orn-bd"/>
</dbReference>
<dbReference type="InterPro" id="IPR011761">
    <property type="entry name" value="ATP-grasp"/>
</dbReference>
<dbReference type="InterPro" id="IPR013815">
    <property type="entry name" value="ATP_grasp_subdomain_1"/>
</dbReference>
<dbReference type="InterPro" id="IPR006275">
    <property type="entry name" value="CarbamoylP_synth_lsu"/>
</dbReference>
<dbReference type="InterPro" id="IPR005480">
    <property type="entry name" value="CarbamoylP_synth_lsu_oligo"/>
</dbReference>
<dbReference type="InterPro" id="IPR036897">
    <property type="entry name" value="CarbamoylP_synth_lsu_oligo_sf"/>
</dbReference>
<dbReference type="InterPro" id="IPR006274">
    <property type="entry name" value="CarbamoylP_synth_ssu"/>
</dbReference>
<dbReference type="InterPro" id="IPR002474">
    <property type="entry name" value="CarbamoylP_synth_ssu_N"/>
</dbReference>
<dbReference type="InterPro" id="IPR036480">
    <property type="entry name" value="CarbP_synth_ssu_N_sf"/>
</dbReference>
<dbReference type="InterPro" id="IPR005479">
    <property type="entry name" value="CbamoylP_synth_lsu-like_ATP-bd"/>
</dbReference>
<dbReference type="InterPro" id="IPR005483">
    <property type="entry name" value="CbamoylP_synth_lsu_CPSase_dom"/>
</dbReference>
<dbReference type="InterPro" id="IPR029062">
    <property type="entry name" value="Class_I_gatase-like"/>
</dbReference>
<dbReference type="InterPro" id="IPR035686">
    <property type="entry name" value="CPSase_GATase1"/>
</dbReference>
<dbReference type="InterPro" id="IPR002195">
    <property type="entry name" value="Dihydroorotase_CS"/>
</dbReference>
<dbReference type="InterPro" id="IPR017926">
    <property type="entry name" value="GATASE"/>
</dbReference>
<dbReference type="InterPro" id="IPR011059">
    <property type="entry name" value="Metal-dep_hydrolase_composite"/>
</dbReference>
<dbReference type="InterPro" id="IPR032466">
    <property type="entry name" value="Metal_Hydrolase"/>
</dbReference>
<dbReference type="InterPro" id="IPR011607">
    <property type="entry name" value="MGS-like_dom"/>
</dbReference>
<dbReference type="InterPro" id="IPR036914">
    <property type="entry name" value="MGS-like_dom_sf"/>
</dbReference>
<dbReference type="InterPro" id="IPR016185">
    <property type="entry name" value="PreATP-grasp_dom_sf"/>
</dbReference>
<dbReference type="NCBIfam" id="TIGR00670">
    <property type="entry name" value="asp_carb_tr"/>
    <property type="match status" value="1"/>
</dbReference>
<dbReference type="NCBIfam" id="TIGR01369">
    <property type="entry name" value="CPSaseII_lrg"/>
    <property type="match status" value="1"/>
</dbReference>
<dbReference type="NCBIfam" id="TIGR01368">
    <property type="entry name" value="CPSaseIIsmall"/>
    <property type="match status" value="1"/>
</dbReference>
<dbReference type="NCBIfam" id="NF002032">
    <property type="entry name" value="PRK00856.1"/>
    <property type="match status" value="1"/>
</dbReference>
<dbReference type="NCBIfam" id="NF003671">
    <property type="entry name" value="PRK05294.1"/>
    <property type="match status" value="1"/>
</dbReference>
<dbReference type="NCBIfam" id="NF009455">
    <property type="entry name" value="PRK12815.1"/>
    <property type="match status" value="1"/>
</dbReference>
<dbReference type="NCBIfam" id="NF009475">
    <property type="entry name" value="PRK12838.1"/>
    <property type="match status" value="1"/>
</dbReference>
<dbReference type="PANTHER" id="PTHR11405:SF4">
    <property type="entry name" value="CARBAMOYL-PHOSPHATE SYNTHASE ARGININE-SPECIFIC SMALL CHAIN"/>
    <property type="match status" value="1"/>
</dbReference>
<dbReference type="PANTHER" id="PTHR11405">
    <property type="entry name" value="CARBAMOYLTRANSFERASE FAMILY MEMBER"/>
    <property type="match status" value="1"/>
</dbReference>
<dbReference type="Pfam" id="PF01979">
    <property type="entry name" value="Amidohydro_1"/>
    <property type="match status" value="1"/>
</dbReference>
<dbReference type="Pfam" id="PF02786">
    <property type="entry name" value="CPSase_L_D2"/>
    <property type="match status" value="2"/>
</dbReference>
<dbReference type="Pfam" id="PF02787">
    <property type="entry name" value="CPSase_L_D3"/>
    <property type="match status" value="1"/>
</dbReference>
<dbReference type="Pfam" id="PF00988">
    <property type="entry name" value="CPSase_sm_chain"/>
    <property type="match status" value="1"/>
</dbReference>
<dbReference type="Pfam" id="PF00117">
    <property type="entry name" value="GATase"/>
    <property type="match status" value="1"/>
</dbReference>
<dbReference type="Pfam" id="PF02142">
    <property type="entry name" value="MGS"/>
    <property type="match status" value="1"/>
</dbReference>
<dbReference type="Pfam" id="PF00185">
    <property type="entry name" value="OTCace"/>
    <property type="match status" value="1"/>
</dbReference>
<dbReference type="Pfam" id="PF02729">
    <property type="entry name" value="OTCace_N"/>
    <property type="match status" value="1"/>
</dbReference>
<dbReference type="PRINTS" id="PR00100">
    <property type="entry name" value="AOTCASE"/>
</dbReference>
<dbReference type="PRINTS" id="PR00101">
    <property type="entry name" value="ATCASE"/>
</dbReference>
<dbReference type="PRINTS" id="PR00098">
    <property type="entry name" value="CPSASE"/>
</dbReference>
<dbReference type="PRINTS" id="PR00099">
    <property type="entry name" value="CPSGATASE"/>
</dbReference>
<dbReference type="SMART" id="SM01096">
    <property type="entry name" value="CPSase_L_D3"/>
    <property type="match status" value="1"/>
</dbReference>
<dbReference type="SMART" id="SM01097">
    <property type="entry name" value="CPSase_sm_chain"/>
    <property type="match status" value="1"/>
</dbReference>
<dbReference type="SMART" id="SM00851">
    <property type="entry name" value="MGS"/>
    <property type="match status" value="1"/>
</dbReference>
<dbReference type="SUPFAM" id="SSF53671">
    <property type="entry name" value="Aspartate/ornithine carbamoyltransferase"/>
    <property type="match status" value="1"/>
</dbReference>
<dbReference type="SUPFAM" id="SSF48108">
    <property type="entry name" value="Carbamoyl phosphate synthetase, large subunit connection domain"/>
    <property type="match status" value="1"/>
</dbReference>
<dbReference type="SUPFAM" id="SSF52021">
    <property type="entry name" value="Carbamoyl phosphate synthetase, small subunit N-terminal domain"/>
    <property type="match status" value="1"/>
</dbReference>
<dbReference type="SUPFAM" id="SSF52317">
    <property type="entry name" value="Class I glutamine amidotransferase-like"/>
    <property type="match status" value="1"/>
</dbReference>
<dbReference type="SUPFAM" id="SSF51338">
    <property type="entry name" value="Composite domain of metallo-dependent hydrolases"/>
    <property type="match status" value="1"/>
</dbReference>
<dbReference type="SUPFAM" id="SSF56059">
    <property type="entry name" value="Glutathione synthetase ATP-binding domain-like"/>
    <property type="match status" value="2"/>
</dbReference>
<dbReference type="SUPFAM" id="SSF51556">
    <property type="entry name" value="Metallo-dependent hydrolases"/>
    <property type="match status" value="1"/>
</dbReference>
<dbReference type="SUPFAM" id="SSF52335">
    <property type="entry name" value="Methylglyoxal synthase-like"/>
    <property type="match status" value="1"/>
</dbReference>
<dbReference type="SUPFAM" id="SSF52440">
    <property type="entry name" value="PreATP-grasp domain"/>
    <property type="match status" value="2"/>
</dbReference>
<dbReference type="PROSITE" id="PS50975">
    <property type="entry name" value="ATP_GRASP"/>
    <property type="match status" value="2"/>
</dbReference>
<dbReference type="PROSITE" id="PS00097">
    <property type="entry name" value="CARBAMOYLTRANSFERASE"/>
    <property type="match status" value="1"/>
</dbReference>
<dbReference type="PROSITE" id="PS00866">
    <property type="entry name" value="CPSASE_1"/>
    <property type="match status" value="2"/>
</dbReference>
<dbReference type="PROSITE" id="PS00867">
    <property type="entry name" value="CPSASE_2"/>
    <property type="match status" value="2"/>
</dbReference>
<dbReference type="PROSITE" id="PS00482">
    <property type="entry name" value="DIHYDROOROTASE_1"/>
    <property type="match status" value="1"/>
</dbReference>
<dbReference type="PROSITE" id="PS00483">
    <property type="entry name" value="DIHYDROOROTASE_2"/>
    <property type="match status" value="1"/>
</dbReference>
<dbReference type="PROSITE" id="PS51273">
    <property type="entry name" value="GATASE_TYPE_1"/>
    <property type="match status" value="1"/>
</dbReference>
<dbReference type="PROSITE" id="PS51855">
    <property type="entry name" value="MGS"/>
    <property type="match status" value="1"/>
</dbReference>
<organism>
    <name type="scientific">Mesocricetus auratus</name>
    <name type="common">Golden hamster</name>
    <dbReference type="NCBI Taxonomy" id="10036"/>
    <lineage>
        <taxon>Eukaryota</taxon>
        <taxon>Metazoa</taxon>
        <taxon>Chordata</taxon>
        <taxon>Craniata</taxon>
        <taxon>Vertebrata</taxon>
        <taxon>Euteleostomi</taxon>
        <taxon>Mammalia</taxon>
        <taxon>Eutheria</taxon>
        <taxon>Euarchontoglires</taxon>
        <taxon>Glires</taxon>
        <taxon>Rodentia</taxon>
        <taxon>Myomorpha</taxon>
        <taxon>Muroidea</taxon>
        <taxon>Cricetidae</taxon>
        <taxon>Cricetinae</taxon>
        <taxon>Mesocricetus</taxon>
    </lineage>
</organism>
<accession>P08955</accession>
<accession>P70108</accession>